<reference key="1">
    <citation type="journal article" date="2004" name="Nat. Biotechnol.">
        <title>The genome sequence of the anaerobic, sulfate-reducing bacterium Desulfovibrio vulgaris Hildenborough.</title>
        <authorList>
            <person name="Heidelberg J.F."/>
            <person name="Seshadri R."/>
            <person name="Haveman S.A."/>
            <person name="Hemme C.L."/>
            <person name="Paulsen I.T."/>
            <person name="Kolonay J.F."/>
            <person name="Eisen J.A."/>
            <person name="Ward N.L."/>
            <person name="Methe B.A."/>
            <person name="Brinkac L.M."/>
            <person name="Daugherty S.C."/>
            <person name="DeBoy R.T."/>
            <person name="Dodson R.J."/>
            <person name="Durkin A.S."/>
            <person name="Madupu R."/>
            <person name="Nelson W.C."/>
            <person name="Sullivan S.A."/>
            <person name="Fouts D.E."/>
            <person name="Haft D.H."/>
            <person name="Selengut J."/>
            <person name="Peterson J.D."/>
            <person name="Davidsen T.M."/>
            <person name="Zafar N."/>
            <person name="Zhou L."/>
            <person name="Radune D."/>
            <person name="Dimitrov G."/>
            <person name="Hance M."/>
            <person name="Tran K."/>
            <person name="Khouri H.M."/>
            <person name="Gill J."/>
            <person name="Utterback T.R."/>
            <person name="Feldblyum T.V."/>
            <person name="Wall J.D."/>
            <person name="Voordouw G."/>
            <person name="Fraser C.M."/>
        </authorList>
    </citation>
    <scope>NUCLEOTIDE SEQUENCE [LARGE SCALE GENOMIC DNA]</scope>
    <source>
        <strain>ATCC 29579 / DSM 644 / CCUG 34227 / NCIMB 8303 / VKM B-1760 / Hildenborough</strain>
    </source>
</reference>
<proteinExistence type="inferred from homology"/>
<sequence>MQTRITWHGHSNFQVASGGTNVLIDPFFDGNPVAAARWDAIDRPDLVLVTHDHGDHVGQAIDICKATGAKLGCVVGTDARLVEAGLPRELVLNGIGFNIGGTVECAGARITMTQAYHSSESGVPVGYIVTMPDGFTFYHAGDTGIFSEMELWGRLYAIDLALLPIGGVFTMDPRQAALACSLLRARSVIPMHWGTFPVLEQNTTRFREQLANHAPDCRLFNMTPGESLTLDRSQEGCAC</sequence>
<keyword id="KW-0378">Hydrolase</keyword>
<keyword id="KW-1185">Reference proteome</keyword>
<name>Y3308_NITV2</name>
<gene>
    <name type="ordered locus">DVU_3308</name>
</gene>
<accession>Q725W7</accession>
<organism>
    <name type="scientific">Nitratidesulfovibrio vulgaris (strain ATCC 29579 / DSM 644 / CCUG 34227 / NCIMB 8303 / VKM B-1760 / Hildenborough)</name>
    <name type="common">Desulfovibrio vulgaris</name>
    <dbReference type="NCBI Taxonomy" id="882"/>
    <lineage>
        <taxon>Bacteria</taxon>
        <taxon>Pseudomonadati</taxon>
        <taxon>Thermodesulfobacteriota</taxon>
        <taxon>Desulfovibrionia</taxon>
        <taxon>Desulfovibrionales</taxon>
        <taxon>Desulfovibrionaceae</taxon>
        <taxon>Nitratidesulfovibrio</taxon>
    </lineage>
</organism>
<feature type="chain" id="PRO_0000367176" description="UPF0173 metal-dependent hydrolase DVU_3308">
    <location>
        <begin position="1"/>
        <end position="239"/>
    </location>
</feature>
<dbReference type="EMBL" id="AE017285">
    <property type="protein sequence ID" value="AAS97776.1"/>
    <property type="molecule type" value="Genomic_DNA"/>
</dbReference>
<dbReference type="RefSeq" id="WP_010940564.1">
    <property type="nucleotide sequence ID" value="NC_002937.3"/>
</dbReference>
<dbReference type="RefSeq" id="YP_012516.1">
    <property type="nucleotide sequence ID" value="NC_002937.3"/>
</dbReference>
<dbReference type="SMR" id="Q725W7"/>
<dbReference type="IntAct" id="Q725W7">
    <property type="interactions" value="1"/>
</dbReference>
<dbReference type="STRING" id="882.DVU_3308"/>
<dbReference type="PaxDb" id="882-DVU_3308"/>
<dbReference type="EnsemblBacteria" id="AAS97776">
    <property type="protein sequence ID" value="AAS97776"/>
    <property type="gene ID" value="DVU_3308"/>
</dbReference>
<dbReference type="KEGG" id="dvu:DVU_3308"/>
<dbReference type="PATRIC" id="fig|882.5.peg.3008"/>
<dbReference type="eggNOG" id="COG2220">
    <property type="taxonomic scope" value="Bacteria"/>
</dbReference>
<dbReference type="HOGENOM" id="CLU_070010_4_0_7"/>
<dbReference type="OrthoDB" id="9789133at2"/>
<dbReference type="PhylomeDB" id="Q725W7"/>
<dbReference type="Proteomes" id="UP000002194">
    <property type="component" value="Chromosome"/>
</dbReference>
<dbReference type="GO" id="GO:0016787">
    <property type="term" value="F:hydrolase activity"/>
    <property type="evidence" value="ECO:0007669"/>
    <property type="project" value="UniProtKB-UniRule"/>
</dbReference>
<dbReference type="Gene3D" id="3.60.15.10">
    <property type="entry name" value="Ribonuclease Z/Hydroxyacylglutathione hydrolase-like"/>
    <property type="match status" value="1"/>
</dbReference>
<dbReference type="HAMAP" id="MF_00457">
    <property type="entry name" value="UPF0173"/>
    <property type="match status" value="1"/>
</dbReference>
<dbReference type="InterPro" id="IPR001279">
    <property type="entry name" value="Metallo-B-lactamas"/>
</dbReference>
<dbReference type="InterPro" id="IPR036866">
    <property type="entry name" value="RibonucZ/Hydroxyglut_hydro"/>
</dbReference>
<dbReference type="InterPro" id="IPR022877">
    <property type="entry name" value="UPF0173"/>
</dbReference>
<dbReference type="InterPro" id="IPR050114">
    <property type="entry name" value="UPF0173_UPF0282_UlaG_hydrolase"/>
</dbReference>
<dbReference type="NCBIfam" id="NF001911">
    <property type="entry name" value="PRK00685.1"/>
    <property type="match status" value="1"/>
</dbReference>
<dbReference type="PANTHER" id="PTHR43546:SF3">
    <property type="entry name" value="UPF0173 METAL-DEPENDENT HYDROLASE MJ1163"/>
    <property type="match status" value="1"/>
</dbReference>
<dbReference type="PANTHER" id="PTHR43546">
    <property type="entry name" value="UPF0173 METAL-DEPENDENT HYDROLASE MJ1163-RELATED"/>
    <property type="match status" value="1"/>
</dbReference>
<dbReference type="Pfam" id="PF12706">
    <property type="entry name" value="Lactamase_B_2"/>
    <property type="match status" value="1"/>
</dbReference>
<dbReference type="SMART" id="SM00849">
    <property type="entry name" value="Lactamase_B"/>
    <property type="match status" value="1"/>
</dbReference>
<dbReference type="SUPFAM" id="SSF56281">
    <property type="entry name" value="Metallo-hydrolase/oxidoreductase"/>
    <property type="match status" value="1"/>
</dbReference>
<protein>
    <recommendedName>
        <fullName evidence="1">UPF0173 metal-dependent hydrolase DVU_3308</fullName>
    </recommendedName>
</protein>
<comment type="similarity">
    <text evidence="1">Belongs to the UPF0173 family.</text>
</comment>
<evidence type="ECO:0000255" key="1">
    <source>
        <dbReference type="HAMAP-Rule" id="MF_00457"/>
    </source>
</evidence>